<evidence type="ECO:0000255" key="1">
    <source>
        <dbReference type="HAMAP-Rule" id="MF_00564"/>
    </source>
</evidence>
<dbReference type="EC" id="2.7.7.56" evidence="1"/>
<dbReference type="EMBL" id="CP000312">
    <property type="protein sequence ID" value="ABG85418.1"/>
    <property type="molecule type" value="Genomic_DNA"/>
</dbReference>
<dbReference type="RefSeq" id="WP_011593028.1">
    <property type="nucleotide sequence ID" value="NC_008262.1"/>
</dbReference>
<dbReference type="SMR" id="Q0SQU1"/>
<dbReference type="KEGG" id="cpr:CPR_2240"/>
<dbReference type="Proteomes" id="UP000001824">
    <property type="component" value="Chromosome"/>
</dbReference>
<dbReference type="GO" id="GO:0000175">
    <property type="term" value="F:3'-5'-RNA exonuclease activity"/>
    <property type="evidence" value="ECO:0007669"/>
    <property type="project" value="UniProtKB-UniRule"/>
</dbReference>
<dbReference type="GO" id="GO:0000049">
    <property type="term" value="F:tRNA binding"/>
    <property type="evidence" value="ECO:0007669"/>
    <property type="project" value="UniProtKB-UniRule"/>
</dbReference>
<dbReference type="GO" id="GO:0009022">
    <property type="term" value="F:tRNA nucleotidyltransferase activity"/>
    <property type="evidence" value="ECO:0007669"/>
    <property type="project" value="UniProtKB-UniRule"/>
</dbReference>
<dbReference type="GO" id="GO:0016075">
    <property type="term" value="P:rRNA catabolic process"/>
    <property type="evidence" value="ECO:0007669"/>
    <property type="project" value="UniProtKB-UniRule"/>
</dbReference>
<dbReference type="GO" id="GO:0006364">
    <property type="term" value="P:rRNA processing"/>
    <property type="evidence" value="ECO:0007669"/>
    <property type="project" value="UniProtKB-KW"/>
</dbReference>
<dbReference type="GO" id="GO:0008033">
    <property type="term" value="P:tRNA processing"/>
    <property type="evidence" value="ECO:0007669"/>
    <property type="project" value="UniProtKB-UniRule"/>
</dbReference>
<dbReference type="CDD" id="cd11362">
    <property type="entry name" value="RNase_PH_bact"/>
    <property type="match status" value="1"/>
</dbReference>
<dbReference type="FunFam" id="3.30.230.70:FF:000003">
    <property type="entry name" value="Ribonuclease PH"/>
    <property type="match status" value="1"/>
</dbReference>
<dbReference type="Gene3D" id="3.30.230.70">
    <property type="entry name" value="GHMP Kinase, N-terminal domain"/>
    <property type="match status" value="1"/>
</dbReference>
<dbReference type="HAMAP" id="MF_00564">
    <property type="entry name" value="RNase_PH"/>
    <property type="match status" value="1"/>
</dbReference>
<dbReference type="InterPro" id="IPR001247">
    <property type="entry name" value="ExoRNase_PH_dom1"/>
</dbReference>
<dbReference type="InterPro" id="IPR015847">
    <property type="entry name" value="ExoRNase_PH_dom2"/>
</dbReference>
<dbReference type="InterPro" id="IPR036345">
    <property type="entry name" value="ExoRNase_PH_dom2_sf"/>
</dbReference>
<dbReference type="InterPro" id="IPR027408">
    <property type="entry name" value="PNPase/RNase_PH_dom_sf"/>
</dbReference>
<dbReference type="InterPro" id="IPR020568">
    <property type="entry name" value="Ribosomal_Su5_D2-typ_SF"/>
</dbReference>
<dbReference type="InterPro" id="IPR050080">
    <property type="entry name" value="RNase_PH"/>
</dbReference>
<dbReference type="InterPro" id="IPR002381">
    <property type="entry name" value="RNase_PH_bac-type"/>
</dbReference>
<dbReference type="InterPro" id="IPR018336">
    <property type="entry name" value="RNase_PH_CS"/>
</dbReference>
<dbReference type="NCBIfam" id="TIGR01966">
    <property type="entry name" value="RNasePH"/>
    <property type="match status" value="1"/>
</dbReference>
<dbReference type="PANTHER" id="PTHR11953">
    <property type="entry name" value="EXOSOME COMPLEX COMPONENT"/>
    <property type="match status" value="1"/>
</dbReference>
<dbReference type="PANTHER" id="PTHR11953:SF0">
    <property type="entry name" value="EXOSOME COMPLEX COMPONENT RRP41"/>
    <property type="match status" value="1"/>
</dbReference>
<dbReference type="Pfam" id="PF01138">
    <property type="entry name" value="RNase_PH"/>
    <property type="match status" value="1"/>
</dbReference>
<dbReference type="Pfam" id="PF03725">
    <property type="entry name" value="RNase_PH_C"/>
    <property type="match status" value="1"/>
</dbReference>
<dbReference type="SUPFAM" id="SSF55666">
    <property type="entry name" value="Ribonuclease PH domain 2-like"/>
    <property type="match status" value="1"/>
</dbReference>
<dbReference type="SUPFAM" id="SSF54211">
    <property type="entry name" value="Ribosomal protein S5 domain 2-like"/>
    <property type="match status" value="1"/>
</dbReference>
<dbReference type="PROSITE" id="PS01277">
    <property type="entry name" value="RIBONUCLEASE_PH"/>
    <property type="match status" value="1"/>
</dbReference>
<accession>Q0SQU1</accession>
<sequence>MRSSGRKKEQIRPVKITRNFTKYAEGSVLIEVGDTKVLCTASIEEKVPPFLKGSGEGWITAEYNMIPRSTQSRKQRDINKLKIDGRTMEIQRLIGRALRSAVDMKALGEKTIWIDCDVLQADGGTRTTSITGSFVALVDAVNKLHQKKPFNVYPIRHFVSAVSIGIVGEEKVLDLCYEEDHVAKVDMNVVMIEEGEFIEIQGTGEIGPFSRKELDELLNLAEKGAKQMIQAQKNALKTDSLWIGTGRE</sequence>
<name>RNPH_CLOPS</name>
<protein>
    <recommendedName>
        <fullName evidence="1">Ribonuclease PH</fullName>
        <shortName evidence="1">RNase PH</shortName>
        <ecNumber evidence="1">2.7.7.56</ecNumber>
    </recommendedName>
    <alternativeName>
        <fullName evidence="1">tRNA nucleotidyltransferase</fullName>
    </alternativeName>
</protein>
<keyword id="KW-0548">Nucleotidyltransferase</keyword>
<keyword id="KW-0694">RNA-binding</keyword>
<keyword id="KW-0698">rRNA processing</keyword>
<keyword id="KW-0808">Transferase</keyword>
<keyword id="KW-0819">tRNA processing</keyword>
<keyword id="KW-0820">tRNA-binding</keyword>
<gene>
    <name evidence="1" type="primary">rph</name>
    <name type="ordered locus">CPR_2240</name>
</gene>
<comment type="function">
    <text evidence="1">Phosphorolytic 3'-5' exoribonuclease that plays an important role in tRNA 3'-end maturation. Removes nucleotide residues following the 3'-CCA terminus of tRNAs; can also add nucleotides to the ends of RNA molecules by using nucleoside diphosphates as substrates, but this may not be physiologically important. Probably plays a role in initiation of 16S rRNA degradation (leading to ribosome degradation) during starvation.</text>
</comment>
<comment type="catalytic activity">
    <reaction evidence="1">
        <text>tRNA(n+1) + phosphate = tRNA(n) + a ribonucleoside 5'-diphosphate</text>
        <dbReference type="Rhea" id="RHEA:10628"/>
        <dbReference type="Rhea" id="RHEA-COMP:17343"/>
        <dbReference type="Rhea" id="RHEA-COMP:17344"/>
        <dbReference type="ChEBI" id="CHEBI:43474"/>
        <dbReference type="ChEBI" id="CHEBI:57930"/>
        <dbReference type="ChEBI" id="CHEBI:173114"/>
        <dbReference type="EC" id="2.7.7.56"/>
    </reaction>
</comment>
<comment type="subunit">
    <text evidence="1">Homohexameric ring arranged as a trimer of dimers.</text>
</comment>
<comment type="similarity">
    <text evidence="1">Belongs to the RNase PH family.</text>
</comment>
<reference key="1">
    <citation type="journal article" date="2006" name="Genome Res.">
        <title>Skewed genomic variability in strains of the toxigenic bacterial pathogen, Clostridium perfringens.</title>
        <authorList>
            <person name="Myers G.S.A."/>
            <person name="Rasko D.A."/>
            <person name="Cheung J.K."/>
            <person name="Ravel J."/>
            <person name="Seshadri R."/>
            <person name="DeBoy R.T."/>
            <person name="Ren Q."/>
            <person name="Varga J."/>
            <person name="Awad M.M."/>
            <person name="Brinkac L.M."/>
            <person name="Daugherty S.C."/>
            <person name="Haft D.H."/>
            <person name="Dodson R.J."/>
            <person name="Madupu R."/>
            <person name="Nelson W.C."/>
            <person name="Rosovitz M.J."/>
            <person name="Sullivan S.A."/>
            <person name="Khouri H."/>
            <person name="Dimitrov G.I."/>
            <person name="Watkins K.L."/>
            <person name="Mulligan S."/>
            <person name="Benton J."/>
            <person name="Radune D."/>
            <person name="Fisher D.J."/>
            <person name="Atkins H.S."/>
            <person name="Hiscox T."/>
            <person name="Jost B.H."/>
            <person name="Billington S.J."/>
            <person name="Songer J.G."/>
            <person name="McClane B.A."/>
            <person name="Titball R.W."/>
            <person name="Rood J.I."/>
            <person name="Melville S.B."/>
            <person name="Paulsen I.T."/>
        </authorList>
    </citation>
    <scope>NUCLEOTIDE SEQUENCE [LARGE SCALE GENOMIC DNA]</scope>
    <source>
        <strain>SM101 / Type A</strain>
    </source>
</reference>
<proteinExistence type="inferred from homology"/>
<feature type="chain" id="PRO_1000024797" description="Ribonuclease PH">
    <location>
        <begin position="1"/>
        <end position="248"/>
    </location>
</feature>
<feature type="binding site" evidence="1">
    <location>
        <position position="86"/>
    </location>
    <ligand>
        <name>phosphate</name>
        <dbReference type="ChEBI" id="CHEBI:43474"/>
        <note>substrate</note>
    </ligand>
</feature>
<feature type="binding site" evidence="1">
    <location>
        <begin position="124"/>
        <end position="126"/>
    </location>
    <ligand>
        <name>phosphate</name>
        <dbReference type="ChEBI" id="CHEBI:43474"/>
        <note>substrate</note>
    </ligand>
</feature>
<organism>
    <name type="scientific">Clostridium perfringens (strain SM101 / Type A)</name>
    <dbReference type="NCBI Taxonomy" id="289380"/>
    <lineage>
        <taxon>Bacteria</taxon>
        <taxon>Bacillati</taxon>
        <taxon>Bacillota</taxon>
        <taxon>Clostridia</taxon>
        <taxon>Eubacteriales</taxon>
        <taxon>Clostridiaceae</taxon>
        <taxon>Clostridium</taxon>
    </lineage>
</organism>